<organism>
    <name type="scientific">Phocaeicola vulgatus (strain ATCC 8482 / DSM 1447 / JCM 5826 / CCUG 4940 / NBRC 14291 / NCTC 11154)</name>
    <name type="common">Bacteroides vulgatus</name>
    <dbReference type="NCBI Taxonomy" id="435590"/>
    <lineage>
        <taxon>Bacteria</taxon>
        <taxon>Pseudomonadati</taxon>
        <taxon>Bacteroidota</taxon>
        <taxon>Bacteroidia</taxon>
        <taxon>Bacteroidales</taxon>
        <taxon>Bacteroidaceae</taxon>
        <taxon>Phocaeicola</taxon>
    </lineage>
</organism>
<sequence length="358" mass="40263">MFDFSIVTQWVHSLLTSFMPEELAVLIECIVIGVCIMLAYAVIAIIMIFMERKVCAAFQCRLGPMRVGPQGTIQVFADVFKMLIKEIITIRHADKFLYNLAPYIVILASIMAFSCLPINKGMEVLDFNVGIFFLLAASSIGVVGILLAGWSSNNKYSLIGAMRSGAQMISYELSVGLSILTIVILTDTMQLSEIVERQADGWFLFKGHIPALIAFIIYLIAGNAEVNRGPFDLPEAESELTAGYHTEYSGMHFGLFYVAEFVNLFIIAAVATTIFLGGWMPLHIPGLDGFNAIMDYIPGFIWFFGKSFFVVWLLMWIKWTFPRLRIDQILTLEWKYLVPIGLCNLLLMVIIVVFKLHF</sequence>
<protein>
    <recommendedName>
        <fullName evidence="1">NADH-quinone oxidoreductase subunit H</fullName>
        <ecNumber evidence="1">7.1.1.-</ecNumber>
    </recommendedName>
    <alternativeName>
        <fullName evidence="1">NADH dehydrogenase I subunit H</fullName>
    </alternativeName>
    <alternativeName>
        <fullName evidence="1">NDH-1 subunit H</fullName>
    </alternativeName>
</protein>
<name>NUOH_PHOV8</name>
<evidence type="ECO:0000255" key="1">
    <source>
        <dbReference type="HAMAP-Rule" id="MF_01350"/>
    </source>
</evidence>
<comment type="function">
    <text evidence="1">NDH-1 shuttles electrons from NADH, via FMN and iron-sulfur (Fe-S) centers, to quinones in the respiratory chain. The immediate electron acceptor for the enzyme in this species is believed to be ubiquinone. Couples the redox reaction to proton translocation (for every two electrons transferred, four hydrogen ions are translocated across the cytoplasmic membrane), and thus conserves the redox energy in a proton gradient. This subunit may bind ubiquinone.</text>
</comment>
<comment type="catalytic activity">
    <reaction evidence="1">
        <text>a quinone + NADH + 5 H(+)(in) = a quinol + NAD(+) + 4 H(+)(out)</text>
        <dbReference type="Rhea" id="RHEA:57888"/>
        <dbReference type="ChEBI" id="CHEBI:15378"/>
        <dbReference type="ChEBI" id="CHEBI:24646"/>
        <dbReference type="ChEBI" id="CHEBI:57540"/>
        <dbReference type="ChEBI" id="CHEBI:57945"/>
        <dbReference type="ChEBI" id="CHEBI:132124"/>
    </reaction>
</comment>
<comment type="subunit">
    <text evidence="1">NDH-1 is composed of 14 different subunits. Subunits NuoA, H, J, K, L, M, N constitute the membrane sector of the complex.</text>
</comment>
<comment type="subcellular location">
    <subcellularLocation>
        <location evidence="1">Cell inner membrane</location>
        <topology evidence="1">Multi-pass membrane protein</topology>
    </subcellularLocation>
</comment>
<comment type="similarity">
    <text evidence="1">Belongs to the complex I subunit 1 family.</text>
</comment>
<reference key="1">
    <citation type="journal article" date="2007" name="PLoS Biol.">
        <title>Evolution of symbiotic bacteria in the distal human intestine.</title>
        <authorList>
            <person name="Xu J."/>
            <person name="Mahowald M.A."/>
            <person name="Ley R.E."/>
            <person name="Lozupone C.A."/>
            <person name="Hamady M."/>
            <person name="Martens E.C."/>
            <person name="Henrissat B."/>
            <person name="Coutinho P.M."/>
            <person name="Minx P."/>
            <person name="Latreille P."/>
            <person name="Cordum H."/>
            <person name="Van Brunt A."/>
            <person name="Kim K."/>
            <person name="Fulton R.S."/>
            <person name="Fulton L.A."/>
            <person name="Clifton S.W."/>
            <person name="Wilson R.K."/>
            <person name="Knight R.D."/>
            <person name="Gordon J.I."/>
        </authorList>
    </citation>
    <scope>NUCLEOTIDE SEQUENCE [LARGE SCALE GENOMIC DNA]</scope>
    <source>
        <strain>ATCC 8482 / DSM 1447 / JCM 5826 / CCUG 4940 / NBRC 14291 / NCTC 11154</strain>
    </source>
</reference>
<accession>A6L168</accession>
<dbReference type="EC" id="7.1.1.-" evidence="1"/>
<dbReference type="EMBL" id="CP000139">
    <property type="protein sequence ID" value="ABR39432.1"/>
    <property type="molecule type" value="Genomic_DNA"/>
</dbReference>
<dbReference type="RefSeq" id="WP_005849254.1">
    <property type="nucleotide sequence ID" value="NZ_JANSWM010000100.1"/>
</dbReference>
<dbReference type="SMR" id="A6L168"/>
<dbReference type="STRING" id="435590.BVU_1756"/>
<dbReference type="PaxDb" id="435590-BVU_1756"/>
<dbReference type="GeneID" id="93445521"/>
<dbReference type="KEGG" id="bvu:BVU_1756"/>
<dbReference type="eggNOG" id="COG1005">
    <property type="taxonomic scope" value="Bacteria"/>
</dbReference>
<dbReference type="HOGENOM" id="CLU_015134_0_1_10"/>
<dbReference type="BioCyc" id="BVUL435590:G1G59-1844-MONOMER"/>
<dbReference type="Proteomes" id="UP000002861">
    <property type="component" value="Chromosome"/>
</dbReference>
<dbReference type="GO" id="GO:0005886">
    <property type="term" value="C:plasma membrane"/>
    <property type="evidence" value="ECO:0007669"/>
    <property type="project" value="UniProtKB-SubCell"/>
</dbReference>
<dbReference type="GO" id="GO:0003954">
    <property type="term" value="F:NADH dehydrogenase activity"/>
    <property type="evidence" value="ECO:0007669"/>
    <property type="project" value="TreeGrafter"/>
</dbReference>
<dbReference type="GO" id="GO:0016655">
    <property type="term" value="F:oxidoreductase activity, acting on NAD(P)H, quinone or similar compound as acceptor"/>
    <property type="evidence" value="ECO:0007669"/>
    <property type="project" value="UniProtKB-UniRule"/>
</dbReference>
<dbReference type="GO" id="GO:0048038">
    <property type="term" value="F:quinone binding"/>
    <property type="evidence" value="ECO:0007669"/>
    <property type="project" value="UniProtKB-KW"/>
</dbReference>
<dbReference type="GO" id="GO:0009060">
    <property type="term" value="P:aerobic respiration"/>
    <property type="evidence" value="ECO:0007669"/>
    <property type="project" value="TreeGrafter"/>
</dbReference>
<dbReference type="HAMAP" id="MF_01350">
    <property type="entry name" value="NDH1_NuoH"/>
    <property type="match status" value="1"/>
</dbReference>
<dbReference type="InterPro" id="IPR001694">
    <property type="entry name" value="NADH_UbQ_OxRdtase_su1/FPO"/>
</dbReference>
<dbReference type="InterPro" id="IPR018086">
    <property type="entry name" value="NADH_UbQ_OxRdtase_su1_CS"/>
</dbReference>
<dbReference type="NCBIfam" id="NF004741">
    <property type="entry name" value="PRK06076.1-2"/>
    <property type="match status" value="1"/>
</dbReference>
<dbReference type="PANTHER" id="PTHR11432">
    <property type="entry name" value="NADH DEHYDROGENASE SUBUNIT 1"/>
    <property type="match status" value="1"/>
</dbReference>
<dbReference type="PANTHER" id="PTHR11432:SF3">
    <property type="entry name" value="NADH-UBIQUINONE OXIDOREDUCTASE CHAIN 1"/>
    <property type="match status" value="1"/>
</dbReference>
<dbReference type="Pfam" id="PF00146">
    <property type="entry name" value="NADHdh"/>
    <property type="match status" value="1"/>
</dbReference>
<dbReference type="PROSITE" id="PS00668">
    <property type="entry name" value="COMPLEX1_ND1_2"/>
    <property type="match status" value="1"/>
</dbReference>
<keyword id="KW-0997">Cell inner membrane</keyword>
<keyword id="KW-1003">Cell membrane</keyword>
<keyword id="KW-0472">Membrane</keyword>
<keyword id="KW-0520">NAD</keyword>
<keyword id="KW-0874">Quinone</keyword>
<keyword id="KW-1278">Translocase</keyword>
<keyword id="KW-0812">Transmembrane</keyword>
<keyword id="KW-1133">Transmembrane helix</keyword>
<keyword id="KW-0830">Ubiquinone</keyword>
<gene>
    <name evidence="1" type="primary">nuoH</name>
    <name type="ordered locus">BVU_1756</name>
</gene>
<proteinExistence type="inferred from homology"/>
<feature type="chain" id="PRO_1000067733" description="NADH-quinone oxidoreductase subunit H">
    <location>
        <begin position="1"/>
        <end position="358"/>
    </location>
</feature>
<feature type="transmembrane region" description="Helical" evidence="1">
    <location>
        <begin position="30"/>
        <end position="50"/>
    </location>
</feature>
<feature type="transmembrane region" description="Helical" evidence="1">
    <location>
        <begin position="96"/>
        <end position="116"/>
    </location>
</feature>
<feature type="transmembrane region" description="Helical" evidence="1">
    <location>
        <begin position="129"/>
        <end position="149"/>
    </location>
</feature>
<feature type="transmembrane region" description="Helical" evidence="1">
    <location>
        <begin position="165"/>
        <end position="185"/>
    </location>
</feature>
<feature type="transmembrane region" description="Helical" evidence="1">
    <location>
        <begin position="201"/>
        <end position="221"/>
    </location>
</feature>
<feature type="transmembrane region" description="Helical" evidence="1">
    <location>
        <begin position="264"/>
        <end position="284"/>
    </location>
</feature>
<feature type="transmembrane region" description="Helical" evidence="1">
    <location>
        <begin position="297"/>
        <end position="317"/>
    </location>
</feature>
<feature type="transmembrane region" description="Helical" evidence="1">
    <location>
        <begin position="336"/>
        <end position="356"/>
    </location>
</feature>